<sequence>MKHRVKHIHFVGIGGVGMCGIAEVLHGLGYTVSGSDMADGATTKRLAAEGVRVFFGHDATYVEGADVVVTSTAVKADNPEVLAARDKRIPVIPRALMLAELMRFKQGIAIAGTHGKTTTTSLTASVLGAAGLDPTFVIGGKLTAAGTNAKLGLGEFLVAEADESDASFLHLTPVMAVVTNIDADHMDTYDHSFDKLKQAFVDFLQRMPFYGRAVLCVDDPNVREIRERVTKPVTTYGLDDSADIYAENVRAAAGQMHFDVVVKNGAITRFPLVLNLPGRHNVLNALSAIAIGLECGASIEAIQKGLSEFAGVGRRFQRYGEVKAQDGGSFTLIDDYGHHPVEMAATLAAVRGAFPDRRLLLAFQPHRYTRTRDLFEDFVKVLSGVDALLLSEVYAAGEAPIVAADGRALARAVRVGGKVEPLFVEDIADMPQAILDAARDGDVVVTMGAGSVGAVPGKVTALAG</sequence>
<reference key="1">
    <citation type="journal article" date="2003" name="Proc. Natl. Acad. Sci. U.S.A.">
        <title>The complete genome sequence of Chromobacterium violaceum reveals remarkable and exploitable bacterial adaptability.</title>
        <authorList>
            <person name="Vasconcelos A.T.R."/>
            <person name="de Almeida D.F."/>
            <person name="Hungria M."/>
            <person name="Guimaraes C.T."/>
            <person name="Antonio R.V."/>
            <person name="Almeida F.C."/>
            <person name="de Almeida L.G.P."/>
            <person name="de Almeida R."/>
            <person name="Alves-Gomes J.A."/>
            <person name="Andrade E.M."/>
            <person name="Araripe J."/>
            <person name="de Araujo M.F.F."/>
            <person name="Astolfi-Filho S."/>
            <person name="Azevedo V."/>
            <person name="Baptista A.J."/>
            <person name="Bataus L.A.M."/>
            <person name="Batista J.S."/>
            <person name="Belo A."/>
            <person name="van den Berg C."/>
            <person name="Bogo M."/>
            <person name="Bonatto S."/>
            <person name="Bordignon J."/>
            <person name="Brigido M.M."/>
            <person name="Brito C.A."/>
            <person name="Brocchi M."/>
            <person name="Burity H.A."/>
            <person name="Camargo A.A."/>
            <person name="Cardoso D.D.P."/>
            <person name="Carneiro N.P."/>
            <person name="Carraro D.M."/>
            <person name="Carvalho C.M.B."/>
            <person name="Cascardo J.C.M."/>
            <person name="Cavada B.S."/>
            <person name="Chueire L.M.O."/>
            <person name="Creczynski-Pasa T.B."/>
            <person name="Cunha-Junior N.C."/>
            <person name="Fagundes N."/>
            <person name="Falcao C.L."/>
            <person name="Fantinatti F."/>
            <person name="Farias I.P."/>
            <person name="Felipe M.S.S."/>
            <person name="Ferrari L.P."/>
            <person name="Ferro J.A."/>
            <person name="Ferro M.I.T."/>
            <person name="Franco G.R."/>
            <person name="Freitas N.S.A."/>
            <person name="Furlan L.R."/>
            <person name="Gazzinelli R.T."/>
            <person name="Gomes E.A."/>
            <person name="Goncalves P.R."/>
            <person name="Grangeiro T.B."/>
            <person name="Grattapaglia D."/>
            <person name="Grisard E.C."/>
            <person name="Hanna E.S."/>
            <person name="Jardim S.N."/>
            <person name="Laurino J."/>
            <person name="Leoi L.C.T."/>
            <person name="Lima L.F.A."/>
            <person name="Loureiro M.F."/>
            <person name="Lyra M.C.C.P."/>
            <person name="Madeira H.M.F."/>
            <person name="Manfio G.P."/>
            <person name="Maranhao A.Q."/>
            <person name="Martins W.S."/>
            <person name="di Mauro S.M.Z."/>
            <person name="de Medeiros S.R.B."/>
            <person name="Meissner R.V."/>
            <person name="Moreira M.A.M."/>
            <person name="Nascimento F.F."/>
            <person name="Nicolas M.F."/>
            <person name="Oliveira J.G."/>
            <person name="Oliveira S.C."/>
            <person name="Paixao R.F.C."/>
            <person name="Parente J.A."/>
            <person name="Pedrosa F.O."/>
            <person name="Pena S.D.J."/>
            <person name="Pereira J.O."/>
            <person name="Pereira M."/>
            <person name="Pinto L.S.R.C."/>
            <person name="Pinto L.S."/>
            <person name="Porto J.I.R."/>
            <person name="Potrich D.P."/>
            <person name="Ramalho-Neto C.E."/>
            <person name="Reis A.M.M."/>
            <person name="Rigo L.U."/>
            <person name="Rondinelli E."/>
            <person name="Santos E.B.P."/>
            <person name="Santos F.R."/>
            <person name="Schneider M.P.C."/>
            <person name="Seuanez H.N."/>
            <person name="Silva A.M.R."/>
            <person name="da Silva A.L.C."/>
            <person name="Silva D.W."/>
            <person name="Silva R."/>
            <person name="Simoes I.C."/>
            <person name="Simon D."/>
            <person name="Soares C.M.A."/>
            <person name="Soares R.B.A."/>
            <person name="Souza E.M."/>
            <person name="Souza K.R.L."/>
            <person name="Souza R.C."/>
            <person name="Steffens M.B.R."/>
            <person name="Steindel M."/>
            <person name="Teixeira S.R."/>
            <person name="Urmenyi T."/>
            <person name="Vettore A."/>
            <person name="Wassem R."/>
            <person name="Zaha A."/>
            <person name="Simpson A.J.G."/>
        </authorList>
    </citation>
    <scope>NUCLEOTIDE SEQUENCE [LARGE SCALE GENOMIC DNA]</scope>
    <source>
        <strain>ATCC 12472 / DSM 30191 / JCM 1249 / CCUG 213 / NBRC 12614 / NCIMB 9131 / NCTC 9757 / MK</strain>
    </source>
</reference>
<accession>Q7NQ00</accession>
<organism>
    <name type="scientific">Chromobacterium violaceum (strain ATCC 12472 / DSM 30191 / JCM 1249 / CCUG 213 / NBRC 12614 / NCIMB 9131 / NCTC 9757 / MK)</name>
    <dbReference type="NCBI Taxonomy" id="243365"/>
    <lineage>
        <taxon>Bacteria</taxon>
        <taxon>Pseudomonadati</taxon>
        <taxon>Pseudomonadota</taxon>
        <taxon>Betaproteobacteria</taxon>
        <taxon>Neisseriales</taxon>
        <taxon>Chromobacteriaceae</taxon>
        <taxon>Chromobacterium</taxon>
    </lineage>
</organism>
<comment type="function">
    <text evidence="1">Cell wall formation.</text>
</comment>
<comment type="catalytic activity">
    <reaction evidence="1">
        <text>UDP-N-acetyl-alpha-D-muramate + L-alanine + ATP = UDP-N-acetyl-alpha-D-muramoyl-L-alanine + ADP + phosphate + H(+)</text>
        <dbReference type="Rhea" id="RHEA:23372"/>
        <dbReference type="ChEBI" id="CHEBI:15378"/>
        <dbReference type="ChEBI" id="CHEBI:30616"/>
        <dbReference type="ChEBI" id="CHEBI:43474"/>
        <dbReference type="ChEBI" id="CHEBI:57972"/>
        <dbReference type="ChEBI" id="CHEBI:70757"/>
        <dbReference type="ChEBI" id="CHEBI:83898"/>
        <dbReference type="ChEBI" id="CHEBI:456216"/>
        <dbReference type="EC" id="6.3.2.8"/>
    </reaction>
</comment>
<comment type="pathway">
    <text evidence="1">Cell wall biogenesis; peptidoglycan biosynthesis.</text>
</comment>
<comment type="subcellular location">
    <subcellularLocation>
        <location evidence="1">Cytoplasm</location>
    </subcellularLocation>
</comment>
<comment type="similarity">
    <text evidence="1">Belongs to the MurCDEF family.</text>
</comment>
<feature type="chain" id="PRO_0000182078" description="UDP-N-acetylmuramate--L-alanine ligase">
    <location>
        <begin position="1"/>
        <end position="464"/>
    </location>
</feature>
<feature type="binding site" evidence="1">
    <location>
        <begin position="112"/>
        <end position="118"/>
    </location>
    <ligand>
        <name>ATP</name>
        <dbReference type="ChEBI" id="CHEBI:30616"/>
    </ligand>
</feature>
<protein>
    <recommendedName>
        <fullName evidence="1">UDP-N-acetylmuramate--L-alanine ligase</fullName>
        <ecNumber evidence="1">6.3.2.8</ecNumber>
    </recommendedName>
    <alternativeName>
        <fullName evidence="1">UDP-N-acetylmuramoyl-L-alanine synthetase</fullName>
    </alternativeName>
</protein>
<name>MURC_CHRVO</name>
<dbReference type="EC" id="6.3.2.8" evidence="1"/>
<dbReference type="EMBL" id="AE016825">
    <property type="protein sequence ID" value="AAQ62001.1"/>
    <property type="molecule type" value="Genomic_DNA"/>
</dbReference>
<dbReference type="RefSeq" id="WP_011137888.1">
    <property type="nucleotide sequence ID" value="NC_005085.1"/>
</dbReference>
<dbReference type="SMR" id="Q7NQ00"/>
<dbReference type="STRING" id="243365.CV_4342"/>
<dbReference type="KEGG" id="cvi:CV_4342"/>
<dbReference type="eggNOG" id="COG0773">
    <property type="taxonomic scope" value="Bacteria"/>
</dbReference>
<dbReference type="HOGENOM" id="CLU_028104_2_2_4"/>
<dbReference type="OrthoDB" id="9804126at2"/>
<dbReference type="UniPathway" id="UPA00219"/>
<dbReference type="Proteomes" id="UP000001424">
    <property type="component" value="Chromosome"/>
</dbReference>
<dbReference type="GO" id="GO:0005737">
    <property type="term" value="C:cytoplasm"/>
    <property type="evidence" value="ECO:0007669"/>
    <property type="project" value="UniProtKB-SubCell"/>
</dbReference>
<dbReference type="GO" id="GO:0005524">
    <property type="term" value="F:ATP binding"/>
    <property type="evidence" value="ECO:0007669"/>
    <property type="project" value="UniProtKB-UniRule"/>
</dbReference>
<dbReference type="GO" id="GO:0008763">
    <property type="term" value="F:UDP-N-acetylmuramate-L-alanine ligase activity"/>
    <property type="evidence" value="ECO:0007669"/>
    <property type="project" value="UniProtKB-UniRule"/>
</dbReference>
<dbReference type="GO" id="GO:0051301">
    <property type="term" value="P:cell division"/>
    <property type="evidence" value="ECO:0007669"/>
    <property type="project" value="UniProtKB-KW"/>
</dbReference>
<dbReference type="GO" id="GO:0071555">
    <property type="term" value="P:cell wall organization"/>
    <property type="evidence" value="ECO:0007669"/>
    <property type="project" value="UniProtKB-KW"/>
</dbReference>
<dbReference type="GO" id="GO:0009252">
    <property type="term" value="P:peptidoglycan biosynthetic process"/>
    <property type="evidence" value="ECO:0007669"/>
    <property type="project" value="UniProtKB-UniRule"/>
</dbReference>
<dbReference type="GO" id="GO:0008360">
    <property type="term" value="P:regulation of cell shape"/>
    <property type="evidence" value="ECO:0007669"/>
    <property type="project" value="UniProtKB-KW"/>
</dbReference>
<dbReference type="FunFam" id="3.40.1190.10:FF:000001">
    <property type="entry name" value="UDP-N-acetylmuramate--L-alanine ligase"/>
    <property type="match status" value="1"/>
</dbReference>
<dbReference type="Gene3D" id="3.90.190.20">
    <property type="entry name" value="Mur ligase, C-terminal domain"/>
    <property type="match status" value="1"/>
</dbReference>
<dbReference type="Gene3D" id="3.40.1190.10">
    <property type="entry name" value="Mur-like, catalytic domain"/>
    <property type="match status" value="1"/>
</dbReference>
<dbReference type="Gene3D" id="3.40.50.720">
    <property type="entry name" value="NAD(P)-binding Rossmann-like Domain"/>
    <property type="match status" value="1"/>
</dbReference>
<dbReference type="HAMAP" id="MF_00046">
    <property type="entry name" value="MurC"/>
    <property type="match status" value="1"/>
</dbReference>
<dbReference type="InterPro" id="IPR036565">
    <property type="entry name" value="Mur-like_cat_sf"/>
</dbReference>
<dbReference type="InterPro" id="IPR004101">
    <property type="entry name" value="Mur_ligase_C"/>
</dbReference>
<dbReference type="InterPro" id="IPR036615">
    <property type="entry name" value="Mur_ligase_C_dom_sf"/>
</dbReference>
<dbReference type="InterPro" id="IPR013221">
    <property type="entry name" value="Mur_ligase_cen"/>
</dbReference>
<dbReference type="InterPro" id="IPR000713">
    <property type="entry name" value="Mur_ligase_N"/>
</dbReference>
<dbReference type="InterPro" id="IPR050061">
    <property type="entry name" value="MurCDEF_pg_biosynth"/>
</dbReference>
<dbReference type="InterPro" id="IPR005758">
    <property type="entry name" value="UDP-N-AcMur_Ala_ligase_MurC"/>
</dbReference>
<dbReference type="NCBIfam" id="TIGR01082">
    <property type="entry name" value="murC"/>
    <property type="match status" value="1"/>
</dbReference>
<dbReference type="PANTHER" id="PTHR43445:SF3">
    <property type="entry name" value="UDP-N-ACETYLMURAMATE--L-ALANINE LIGASE"/>
    <property type="match status" value="1"/>
</dbReference>
<dbReference type="PANTHER" id="PTHR43445">
    <property type="entry name" value="UDP-N-ACETYLMURAMATE--L-ALANINE LIGASE-RELATED"/>
    <property type="match status" value="1"/>
</dbReference>
<dbReference type="Pfam" id="PF01225">
    <property type="entry name" value="Mur_ligase"/>
    <property type="match status" value="1"/>
</dbReference>
<dbReference type="Pfam" id="PF02875">
    <property type="entry name" value="Mur_ligase_C"/>
    <property type="match status" value="1"/>
</dbReference>
<dbReference type="Pfam" id="PF08245">
    <property type="entry name" value="Mur_ligase_M"/>
    <property type="match status" value="1"/>
</dbReference>
<dbReference type="SUPFAM" id="SSF51984">
    <property type="entry name" value="MurCD N-terminal domain"/>
    <property type="match status" value="1"/>
</dbReference>
<dbReference type="SUPFAM" id="SSF53623">
    <property type="entry name" value="MurD-like peptide ligases, catalytic domain"/>
    <property type="match status" value="1"/>
</dbReference>
<dbReference type="SUPFAM" id="SSF53244">
    <property type="entry name" value="MurD-like peptide ligases, peptide-binding domain"/>
    <property type="match status" value="1"/>
</dbReference>
<gene>
    <name evidence="1" type="primary">murC</name>
    <name type="ordered locus">CV_4342</name>
</gene>
<proteinExistence type="inferred from homology"/>
<keyword id="KW-0067">ATP-binding</keyword>
<keyword id="KW-0131">Cell cycle</keyword>
<keyword id="KW-0132">Cell division</keyword>
<keyword id="KW-0133">Cell shape</keyword>
<keyword id="KW-0961">Cell wall biogenesis/degradation</keyword>
<keyword id="KW-0963">Cytoplasm</keyword>
<keyword id="KW-0436">Ligase</keyword>
<keyword id="KW-0547">Nucleotide-binding</keyword>
<keyword id="KW-0573">Peptidoglycan synthesis</keyword>
<keyword id="KW-1185">Reference proteome</keyword>
<evidence type="ECO:0000255" key="1">
    <source>
        <dbReference type="HAMAP-Rule" id="MF_00046"/>
    </source>
</evidence>